<evidence type="ECO:0000255" key="1">
    <source>
        <dbReference type="HAMAP-Rule" id="MF_01854"/>
    </source>
</evidence>
<proteinExistence type="inferred from homology"/>
<protein>
    <recommendedName>
        <fullName evidence="1">Fructose-1,6-bisphosphatase class 3</fullName>
        <shortName evidence="1">FBPase class 3</shortName>
        <ecNumber evidence="1">3.1.3.11</ecNumber>
    </recommendedName>
    <alternativeName>
        <fullName evidence="1">D-fructose-1,6-bisphosphate 1-phosphohydrolase class 3</fullName>
    </alternativeName>
</protein>
<dbReference type="EC" id="3.1.3.11" evidence="1"/>
<dbReference type="EMBL" id="FM177140">
    <property type="protein sequence ID" value="CAQ67277.1"/>
    <property type="molecule type" value="Genomic_DNA"/>
</dbReference>
<dbReference type="KEGG" id="lcb:LCABL_22100"/>
<dbReference type="HOGENOM" id="CLU_028392_2_0_9"/>
<dbReference type="UniPathway" id="UPA00138"/>
<dbReference type="GO" id="GO:0042132">
    <property type="term" value="F:fructose 1,6-bisphosphate 1-phosphatase activity"/>
    <property type="evidence" value="ECO:0007669"/>
    <property type="project" value="UniProtKB-UniRule"/>
</dbReference>
<dbReference type="GO" id="GO:0006094">
    <property type="term" value="P:gluconeogenesis"/>
    <property type="evidence" value="ECO:0007669"/>
    <property type="project" value="UniProtKB-UniRule"/>
</dbReference>
<dbReference type="Gene3D" id="3.60.21.10">
    <property type="match status" value="1"/>
</dbReference>
<dbReference type="HAMAP" id="MF_01854">
    <property type="entry name" value="FBPase_class3"/>
    <property type="match status" value="1"/>
</dbReference>
<dbReference type="InterPro" id="IPR009164">
    <property type="entry name" value="FBPtase_class3"/>
</dbReference>
<dbReference type="InterPro" id="IPR029052">
    <property type="entry name" value="Metallo-depent_PP-like"/>
</dbReference>
<dbReference type="Pfam" id="PF06874">
    <property type="entry name" value="FBPase_2"/>
    <property type="match status" value="1"/>
</dbReference>
<dbReference type="PIRSF" id="PIRSF000906">
    <property type="entry name" value="FBPtase_Bacill"/>
    <property type="match status" value="1"/>
</dbReference>
<dbReference type="SUPFAM" id="SSF56300">
    <property type="entry name" value="Metallo-dependent phosphatases"/>
    <property type="match status" value="1"/>
</dbReference>
<sequence length="643" mass="73864">MDLYSELTAKYQTVPAIATEIINLEAILNLPKPTEAFMSDIHGEYNAFQHVLRNGSGNVKSKIRSCFRDEMTEATLQRFAFLVYYPSERMAAIHREMAGDDLQQWYLTTFRRLIRLLAFTATKYTRSKVRKAMAPEFVYITEELLYNDADTPDKLAYYWQIIRNLIVLEQADQWIAATCQTIQRLTVDHFHVVGDIYDRGPAPDQVVESLIRRDRRHSVDIQWGNHDILWIGAAAGSALCIANLVRISARYNNLSILEDVYGINLRHLARLAEQYYQDNPAFSPKMERSDRPITEAERLQITQIHQAIAMIQFKLEGPVIKRRPEFDMDHRLVLEKLAPDFSTIKLNGDTYTIENGCFATVDPADPYKLLPEEQEVIDSLVESFTHSEKLHRHMDFLLDHGSMYLRYNRNLLLHGCVPVDEDGNFIGLTIKGTTYTGRQLFDMLEANLRLAYSQPTENADLATDLMWYLWTGPNSPLFGKHDMTTFERYFISDPKAHVEGRNPYYHLRKDPEFIKKILAEFVLDPEVGHVINGHTPVKKGTDPIMANNKMIVIDGGFSKPYQKTTGIGGYTLLDNSYGMQLVTHQPFTTKADAIANLTDIISTRRVVETEARRRTVAETDIGTELQDEVEVLKRRLGELREEE</sequence>
<gene>
    <name evidence="1" type="primary">fbp</name>
    <name type="ordered locus">LCABL_22100</name>
</gene>
<accession>B3W9A8</accession>
<keyword id="KW-0119">Carbohydrate metabolism</keyword>
<keyword id="KW-0378">Hydrolase</keyword>
<keyword id="KW-0464">Manganese</keyword>
<name>F16PC_LACCB</name>
<comment type="catalytic activity">
    <reaction evidence="1">
        <text>beta-D-fructose 1,6-bisphosphate + H2O = beta-D-fructose 6-phosphate + phosphate</text>
        <dbReference type="Rhea" id="RHEA:11064"/>
        <dbReference type="ChEBI" id="CHEBI:15377"/>
        <dbReference type="ChEBI" id="CHEBI:32966"/>
        <dbReference type="ChEBI" id="CHEBI:43474"/>
        <dbReference type="ChEBI" id="CHEBI:57634"/>
        <dbReference type="EC" id="3.1.3.11"/>
    </reaction>
</comment>
<comment type="cofactor">
    <cofactor evidence="1">
        <name>Mn(2+)</name>
        <dbReference type="ChEBI" id="CHEBI:29035"/>
    </cofactor>
</comment>
<comment type="pathway">
    <text evidence="1">Carbohydrate biosynthesis; gluconeogenesis.</text>
</comment>
<comment type="similarity">
    <text evidence="1">Belongs to the FBPase class 3 family.</text>
</comment>
<feature type="chain" id="PRO_0000363095" description="Fructose-1,6-bisphosphatase class 3">
    <location>
        <begin position="1"/>
        <end position="643"/>
    </location>
</feature>
<reference key="1">
    <citation type="submission" date="2008-06" db="EMBL/GenBank/DDBJ databases">
        <title>Lactobacillus casei BL23 complete genome sequence.</title>
        <authorList>
            <person name="Maze A."/>
            <person name="Boel G."/>
            <person name="Bourand A."/>
            <person name="Loux V."/>
            <person name="Gibrat J.F."/>
            <person name="Zuniga M."/>
            <person name="Hartke A."/>
            <person name="Deutscher J."/>
        </authorList>
    </citation>
    <scope>NUCLEOTIDE SEQUENCE [LARGE SCALE GENOMIC DNA]</scope>
    <source>
        <strain>BL23</strain>
    </source>
</reference>
<organism>
    <name type="scientific">Lacticaseibacillus casei (strain BL23)</name>
    <name type="common">Lactobacillus casei</name>
    <dbReference type="NCBI Taxonomy" id="543734"/>
    <lineage>
        <taxon>Bacteria</taxon>
        <taxon>Bacillati</taxon>
        <taxon>Bacillota</taxon>
        <taxon>Bacilli</taxon>
        <taxon>Lactobacillales</taxon>
        <taxon>Lactobacillaceae</taxon>
        <taxon>Lacticaseibacillus</taxon>
    </lineage>
</organism>